<comment type="function">
    <text evidence="1">Catalyzes the reversible interconversion of serine and glycine with tetrahydrofolate (THF) serving as the one-carbon carrier. This reaction serves as the major source of one-carbon groups required for the biosynthesis of purines, thymidylate, methionine, and other important biomolecules. Also exhibits THF-independent aldolase activity toward beta-hydroxyamino acids, producing glycine and aldehydes, via a retro-aldol mechanism.</text>
</comment>
<comment type="catalytic activity">
    <reaction evidence="1">
        <text>(6R)-5,10-methylene-5,6,7,8-tetrahydrofolate + glycine + H2O = (6S)-5,6,7,8-tetrahydrofolate + L-serine</text>
        <dbReference type="Rhea" id="RHEA:15481"/>
        <dbReference type="ChEBI" id="CHEBI:15377"/>
        <dbReference type="ChEBI" id="CHEBI:15636"/>
        <dbReference type="ChEBI" id="CHEBI:33384"/>
        <dbReference type="ChEBI" id="CHEBI:57305"/>
        <dbReference type="ChEBI" id="CHEBI:57453"/>
        <dbReference type="EC" id="2.1.2.1"/>
    </reaction>
</comment>
<comment type="cofactor">
    <cofactor evidence="1">
        <name>pyridoxal 5'-phosphate</name>
        <dbReference type="ChEBI" id="CHEBI:597326"/>
    </cofactor>
</comment>
<comment type="pathway">
    <text evidence="1">One-carbon metabolism; tetrahydrofolate interconversion.</text>
</comment>
<comment type="pathway">
    <text evidence="1">Amino-acid biosynthesis; glycine biosynthesis; glycine from L-serine: step 1/1.</text>
</comment>
<comment type="subunit">
    <text evidence="1">Homodimer.</text>
</comment>
<comment type="subcellular location">
    <subcellularLocation>
        <location evidence="1">Cytoplasm</location>
    </subcellularLocation>
</comment>
<comment type="similarity">
    <text evidence="1">Belongs to the SHMT family.</text>
</comment>
<keyword id="KW-0028">Amino-acid biosynthesis</keyword>
<keyword id="KW-0963">Cytoplasm</keyword>
<keyword id="KW-0554">One-carbon metabolism</keyword>
<keyword id="KW-0663">Pyridoxal phosphate</keyword>
<keyword id="KW-0808">Transferase</keyword>
<accession>Q4K5R9</accession>
<evidence type="ECO:0000255" key="1">
    <source>
        <dbReference type="HAMAP-Rule" id="MF_00051"/>
    </source>
</evidence>
<organism>
    <name type="scientific">Pseudomonas fluorescens (strain ATCC BAA-477 / NRRL B-23932 / Pf-5)</name>
    <dbReference type="NCBI Taxonomy" id="220664"/>
    <lineage>
        <taxon>Bacteria</taxon>
        <taxon>Pseudomonadati</taxon>
        <taxon>Pseudomonadota</taxon>
        <taxon>Gammaproteobacteria</taxon>
        <taxon>Pseudomonadales</taxon>
        <taxon>Pseudomonadaceae</taxon>
        <taxon>Pseudomonas</taxon>
    </lineage>
</organism>
<name>GLYA1_PSEF5</name>
<feature type="chain" id="PRO_0000235002" description="Serine hydroxymethyltransferase 1">
    <location>
        <begin position="1"/>
        <end position="417"/>
    </location>
</feature>
<feature type="binding site" evidence="1">
    <location>
        <position position="121"/>
    </location>
    <ligand>
        <name>(6S)-5,6,7,8-tetrahydrofolate</name>
        <dbReference type="ChEBI" id="CHEBI:57453"/>
    </ligand>
</feature>
<feature type="binding site" evidence="1">
    <location>
        <begin position="125"/>
        <end position="127"/>
    </location>
    <ligand>
        <name>(6S)-5,6,7,8-tetrahydrofolate</name>
        <dbReference type="ChEBI" id="CHEBI:57453"/>
    </ligand>
</feature>
<feature type="binding site" evidence="1">
    <location>
        <begin position="354"/>
        <end position="356"/>
    </location>
    <ligand>
        <name>(6S)-5,6,7,8-tetrahydrofolate</name>
        <dbReference type="ChEBI" id="CHEBI:57453"/>
    </ligand>
</feature>
<feature type="site" description="Plays an important role in substrate specificity" evidence="1">
    <location>
        <position position="228"/>
    </location>
</feature>
<feature type="modified residue" description="N6-(pyridoxal phosphate)lysine" evidence="1">
    <location>
        <position position="229"/>
    </location>
</feature>
<proteinExistence type="inferred from homology"/>
<sequence length="417" mass="44892">MFSRDLTIAKYDADLFAAMEQEAQRQEEHIELIASENYTSPAVMEAQGSVLTNKYAEGYPGKRYYGGCEYVDVVEQLAIDRAKELFGADYANVQPHAGSQANAAVYLALLQGGDTILGMSLAHGGHLTHGAAVSSSGKLYNAIQYGIDANGLIDYDEVERLAVEHKPKMIVAGFSAYSQILDFPRFREIADKVGAYLFVDMAHVAGLVAAGVYPNPVPFADVVTTTTHKTLRGPRGGLILARANADIEKKLNSAVFPGAQGGPLEHVIAAKAICFKEALQPEFKAYQEQVVKNAQAMAEVFIARGFDVVSGGTKNHLFLLSLIKQDISGKDADAALGKAFITVNKNSVPNDPRSPFVTSGLRFGTPAVTTRGFKEAECKELAGWICDILADLNNEAVIDAVREKVKAICKKLPVYGA</sequence>
<gene>
    <name evidence="1" type="primary">glyA1</name>
    <name type="ordered locus">PFL_5346</name>
</gene>
<dbReference type="EC" id="2.1.2.1" evidence="1"/>
<dbReference type="EMBL" id="CP000076">
    <property type="protein sequence ID" value="AAY94556.1"/>
    <property type="molecule type" value="Genomic_DNA"/>
</dbReference>
<dbReference type="RefSeq" id="WP_011063571.1">
    <property type="nucleotide sequence ID" value="NC_004129.6"/>
</dbReference>
<dbReference type="SMR" id="Q4K5R9"/>
<dbReference type="STRING" id="220664.PFL_5346"/>
<dbReference type="GeneID" id="57478315"/>
<dbReference type="KEGG" id="pfl:PFL_5346"/>
<dbReference type="PATRIC" id="fig|220664.5.peg.5458"/>
<dbReference type="eggNOG" id="COG0112">
    <property type="taxonomic scope" value="Bacteria"/>
</dbReference>
<dbReference type="HOGENOM" id="CLU_022477_2_1_6"/>
<dbReference type="UniPathway" id="UPA00193"/>
<dbReference type="UniPathway" id="UPA00288">
    <property type="reaction ID" value="UER01023"/>
</dbReference>
<dbReference type="Proteomes" id="UP000008540">
    <property type="component" value="Chromosome"/>
</dbReference>
<dbReference type="GO" id="GO:0005829">
    <property type="term" value="C:cytosol"/>
    <property type="evidence" value="ECO:0007669"/>
    <property type="project" value="TreeGrafter"/>
</dbReference>
<dbReference type="GO" id="GO:0004372">
    <property type="term" value="F:glycine hydroxymethyltransferase activity"/>
    <property type="evidence" value="ECO:0007669"/>
    <property type="project" value="UniProtKB-UniRule"/>
</dbReference>
<dbReference type="GO" id="GO:0030170">
    <property type="term" value="F:pyridoxal phosphate binding"/>
    <property type="evidence" value="ECO:0007669"/>
    <property type="project" value="UniProtKB-UniRule"/>
</dbReference>
<dbReference type="GO" id="GO:0019264">
    <property type="term" value="P:glycine biosynthetic process from serine"/>
    <property type="evidence" value="ECO:0007669"/>
    <property type="project" value="UniProtKB-UniRule"/>
</dbReference>
<dbReference type="GO" id="GO:0035999">
    <property type="term" value="P:tetrahydrofolate interconversion"/>
    <property type="evidence" value="ECO:0007669"/>
    <property type="project" value="UniProtKB-UniRule"/>
</dbReference>
<dbReference type="CDD" id="cd00378">
    <property type="entry name" value="SHMT"/>
    <property type="match status" value="1"/>
</dbReference>
<dbReference type="FunFam" id="3.40.640.10:FF:000001">
    <property type="entry name" value="Serine hydroxymethyltransferase"/>
    <property type="match status" value="1"/>
</dbReference>
<dbReference type="FunFam" id="3.90.1150.10:FF:000003">
    <property type="entry name" value="Serine hydroxymethyltransferase"/>
    <property type="match status" value="1"/>
</dbReference>
<dbReference type="Gene3D" id="3.90.1150.10">
    <property type="entry name" value="Aspartate Aminotransferase, domain 1"/>
    <property type="match status" value="1"/>
</dbReference>
<dbReference type="Gene3D" id="3.40.640.10">
    <property type="entry name" value="Type I PLP-dependent aspartate aminotransferase-like (Major domain)"/>
    <property type="match status" value="1"/>
</dbReference>
<dbReference type="HAMAP" id="MF_00051">
    <property type="entry name" value="SHMT"/>
    <property type="match status" value="1"/>
</dbReference>
<dbReference type="InterPro" id="IPR015424">
    <property type="entry name" value="PyrdxlP-dep_Trfase"/>
</dbReference>
<dbReference type="InterPro" id="IPR015421">
    <property type="entry name" value="PyrdxlP-dep_Trfase_major"/>
</dbReference>
<dbReference type="InterPro" id="IPR015422">
    <property type="entry name" value="PyrdxlP-dep_Trfase_small"/>
</dbReference>
<dbReference type="InterPro" id="IPR001085">
    <property type="entry name" value="Ser_HO-MeTrfase"/>
</dbReference>
<dbReference type="InterPro" id="IPR049943">
    <property type="entry name" value="Ser_HO-MeTrfase-like"/>
</dbReference>
<dbReference type="InterPro" id="IPR019798">
    <property type="entry name" value="Ser_HO-MeTrfase_PLP_BS"/>
</dbReference>
<dbReference type="InterPro" id="IPR039429">
    <property type="entry name" value="SHMT-like_dom"/>
</dbReference>
<dbReference type="NCBIfam" id="NF000586">
    <property type="entry name" value="PRK00011.1"/>
    <property type="match status" value="1"/>
</dbReference>
<dbReference type="PANTHER" id="PTHR11680">
    <property type="entry name" value="SERINE HYDROXYMETHYLTRANSFERASE"/>
    <property type="match status" value="1"/>
</dbReference>
<dbReference type="PANTHER" id="PTHR11680:SF50">
    <property type="entry name" value="SERINE HYDROXYMETHYLTRANSFERASE"/>
    <property type="match status" value="1"/>
</dbReference>
<dbReference type="Pfam" id="PF00464">
    <property type="entry name" value="SHMT"/>
    <property type="match status" value="1"/>
</dbReference>
<dbReference type="PIRSF" id="PIRSF000412">
    <property type="entry name" value="SHMT"/>
    <property type="match status" value="1"/>
</dbReference>
<dbReference type="SUPFAM" id="SSF53383">
    <property type="entry name" value="PLP-dependent transferases"/>
    <property type="match status" value="1"/>
</dbReference>
<dbReference type="PROSITE" id="PS00096">
    <property type="entry name" value="SHMT"/>
    <property type="match status" value="1"/>
</dbReference>
<protein>
    <recommendedName>
        <fullName evidence="1">Serine hydroxymethyltransferase 1</fullName>
        <shortName evidence="1">SHMT 1</shortName>
        <shortName evidence="1">Serine methylase 1</shortName>
        <ecNumber evidence="1">2.1.2.1</ecNumber>
    </recommendedName>
</protein>
<reference key="1">
    <citation type="journal article" date="2005" name="Nat. Biotechnol.">
        <title>Complete genome sequence of the plant commensal Pseudomonas fluorescens Pf-5.</title>
        <authorList>
            <person name="Paulsen I.T."/>
            <person name="Press C.M."/>
            <person name="Ravel J."/>
            <person name="Kobayashi D.Y."/>
            <person name="Myers G.S.A."/>
            <person name="Mavrodi D.V."/>
            <person name="DeBoy R.T."/>
            <person name="Seshadri R."/>
            <person name="Ren Q."/>
            <person name="Madupu R."/>
            <person name="Dodson R.J."/>
            <person name="Durkin A.S."/>
            <person name="Brinkac L.M."/>
            <person name="Daugherty S.C."/>
            <person name="Sullivan S.A."/>
            <person name="Rosovitz M.J."/>
            <person name="Gwinn M.L."/>
            <person name="Zhou L."/>
            <person name="Schneider D.J."/>
            <person name="Cartinhour S.W."/>
            <person name="Nelson W.C."/>
            <person name="Weidman J."/>
            <person name="Watkins K."/>
            <person name="Tran K."/>
            <person name="Khouri H."/>
            <person name="Pierson E.A."/>
            <person name="Pierson L.S. III"/>
            <person name="Thomashow L.S."/>
            <person name="Loper J.E."/>
        </authorList>
    </citation>
    <scope>NUCLEOTIDE SEQUENCE [LARGE SCALE GENOMIC DNA]</scope>
    <source>
        <strain>ATCC BAA-477 / NRRL B-23932 / Pf-5</strain>
    </source>
</reference>